<dbReference type="EC" id="4.3.3.7" evidence="1"/>
<dbReference type="EMBL" id="CP000361">
    <property type="protein sequence ID" value="ABV67134.1"/>
    <property type="molecule type" value="Genomic_DNA"/>
</dbReference>
<dbReference type="RefSeq" id="WP_012012603.1">
    <property type="nucleotide sequence ID" value="NC_009850.1"/>
</dbReference>
<dbReference type="SMR" id="A8ET60"/>
<dbReference type="STRING" id="367737.Abu_0874"/>
<dbReference type="GeneID" id="24304950"/>
<dbReference type="KEGG" id="abu:Abu_0874"/>
<dbReference type="eggNOG" id="COG0329">
    <property type="taxonomic scope" value="Bacteria"/>
</dbReference>
<dbReference type="HOGENOM" id="CLU_049343_7_1_7"/>
<dbReference type="UniPathway" id="UPA00034">
    <property type="reaction ID" value="UER00017"/>
</dbReference>
<dbReference type="Proteomes" id="UP000001136">
    <property type="component" value="Chromosome"/>
</dbReference>
<dbReference type="GO" id="GO:0005829">
    <property type="term" value="C:cytosol"/>
    <property type="evidence" value="ECO:0007669"/>
    <property type="project" value="TreeGrafter"/>
</dbReference>
<dbReference type="GO" id="GO:0008840">
    <property type="term" value="F:4-hydroxy-tetrahydrodipicolinate synthase activity"/>
    <property type="evidence" value="ECO:0007669"/>
    <property type="project" value="UniProtKB-UniRule"/>
</dbReference>
<dbReference type="GO" id="GO:0019877">
    <property type="term" value="P:diaminopimelate biosynthetic process"/>
    <property type="evidence" value="ECO:0007669"/>
    <property type="project" value="UniProtKB-UniRule"/>
</dbReference>
<dbReference type="GO" id="GO:0009089">
    <property type="term" value="P:lysine biosynthetic process via diaminopimelate"/>
    <property type="evidence" value="ECO:0007669"/>
    <property type="project" value="UniProtKB-UniRule"/>
</dbReference>
<dbReference type="CDD" id="cd00950">
    <property type="entry name" value="DHDPS"/>
    <property type="match status" value="1"/>
</dbReference>
<dbReference type="Gene3D" id="3.20.20.70">
    <property type="entry name" value="Aldolase class I"/>
    <property type="match status" value="1"/>
</dbReference>
<dbReference type="HAMAP" id="MF_00418">
    <property type="entry name" value="DapA"/>
    <property type="match status" value="1"/>
</dbReference>
<dbReference type="InterPro" id="IPR013785">
    <property type="entry name" value="Aldolase_TIM"/>
</dbReference>
<dbReference type="InterPro" id="IPR005263">
    <property type="entry name" value="DapA"/>
</dbReference>
<dbReference type="InterPro" id="IPR002220">
    <property type="entry name" value="DapA-like"/>
</dbReference>
<dbReference type="InterPro" id="IPR020625">
    <property type="entry name" value="Schiff_base-form_aldolases_AS"/>
</dbReference>
<dbReference type="NCBIfam" id="TIGR00674">
    <property type="entry name" value="dapA"/>
    <property type="match status" value="1"/>
</dbReference>
<dbReference type="PANTHER" id="PTHR12128:SF66">
    <property type="entry name" value="4-HYDROXY-2-OXOGLUTARATE ALDOLASE, MITOCHONDRIAL"/>
    <property type="match status" value="1"/>
</dbReference>
<dbReference type="PANTHER" id="PTHR12128">
    <property type="entry name" value="DIHYDRODIPICOLINATE SYNTHASE"/>
    <property type="match status" value="1"/>
</dbReference>
<dbReference type="Pfam" id="PF00701">
    <property type="entry name" value="DHDPS"/>
    <property type="match status" value="1"/>
</dbReference>
<dbReference type="PIRSF" id="PIRSF001365">
    <property type="entry name" value="DHDPS"/>
    <property type="match status" value="1"/>
</dbReference>
<dbReference type="PRINTS" id="PR00146">
    <property type="entry name" value="DHPICSNTHASE"/>
</dbReference>
<dbReference type="SMART" id="SM01130">
    <property type="entry name" value="DHDPS"/>
    <property type="match status" value="1"/>
</dbReference>
<dbReference type="SUPFAM" id="SSF51569">
    <property type="entry name" value="Aldolase"/>
    <property type="match status" value="1"/>
</dbReference>
<dbReference type="PROSITE" id="PS00666">
    <property type="entry name" value="DHDPS_2"/>
    <property type="match status" value="1"/>
</dbReference>
<reference key="1">
    <citation type="journal article" date="2007" name="PLoS ONE">
        <title>The complete genome sequence and analysis of the Epsilonproteobacterium Arcobacter butzleri.</title>
        <authorList>
            <person name="Miller W.G."/>
            <person name="Parker C.T."/>
            <person name="Rubenfield M."/>
            <person name="Mendz G.L."/>
            <person name="Woesten M.M.S.M."/>
            <person name="Ussery D.W."/>
            <person name="Stolz J.F."/>
            <person name="Binnewies T.T."/>
            <person name="Hallin P.F."/>
            <person name="Wang G."/>
            <person name="Malek J.A."/>
            <person name="Rogosin A."/>
            <person name="Stanker L.H."/>
            <person name="Mandrell R.E."/>
        </authorList>
    </citation>
    <scope>NUCLEOTIDE SEQUENCE [LARGE SCALE GENOMIC DNA]</scope>
    <source>
        <strain>RM4018</strain>
    </source>
</reference>
<keyword id="KW-0028">Amino-acid biosynthesis</keyword>
<keyword id="KW-0963">Cytoplasm</keyword>
<keyword id="KW-0220">Diaminopimelate biosynthesis</keyword>
<keyword id="KW-0456">Lyase</keyword>
<keyword id="KW-0457">Lysine biosynthesis</keyword>
<keyword id="KW-1185">Reference proteome</keyword>
<keyword id="KW-0704">Schiff base</keyword>
<proteinExistence type="inferred from homology"/>
<sequence>MDIITGSMTALITPFKNGKVDLQKYESLIKRQIAQGINAVSPVGTTGESATLSHKEHKECIEVAVATCKNSGVKVLAGAGSNATHEACDIAKFAQEVGADGILSIAPYYNKPTQEGLYQHYKAIANSVELPLMLYNVPGRTGVDLLPETAIRLFDDVKNIYGIKEATGSLERATSLMSARKDFVVVSGDDSVDFPMLASGARGIISVTSNLLPNLKSKLVSSVLEGDYKTSLSIHNDLYELNKTLFCESNPIPIKAAMYLSGLLDSLEFRLPLTNPSAETMQKLEKILIKYEVIK</sequence>
<evidence type="ECO:0000255" key="1">
    <source>
        <dbReference type="HAMAP-Rule" id="MF_00418"/>
    </source>
</evidence>
<evidence type="ECO:0000305" key="2"/>
<gene>
    <name evidence="1" type="primary">dapA</name>
    <name type="ordered locus">Abu_0874</name>
</gene>
<accession>A8ET60</accession>
<feature type="chain" id="PRO_1000060082" description="4-hydroxy-tetrahydrodipicolinate synthase">
    <location>
        <begin position="1"/>
        <end position="295"/>
    </location>
</feature>
<feature type="active site" description="Proton donor/acceptor" evidence="1">
    <location>
        <position position="135"/>
    </location>
</feature>
<feature type="active site" description="Schiff-base intermediate with substrate" evidence="1">
    <location>
        <position position="164"/>
    </location>
</feature>
<feature type="binding site" evidence="1">
    <location>
        <position position="46"/>
    </location>
    <ligand>
        <name>pyruvate</name>
        <dbReference type="ChEBI" id="CHEBI:15361"/>
    </ligand>
</feature>
<feature type="binding site" evidence="1">
    <location>
        <position position="205"/>
    </location>
    <ligand>
        <name>pyruvate</name>
        <dbReference type="ChEBI" id="CHEBI:15361"/>
    </ligand>
</feature>
<feature type="site" description="Part of a proton relay during catalysis" evidence="1">
    <location>
        <position position="45"/>
    </location>
</feature>
<feature type="site" description="Part of a proton relay during catalysis" evidence="1">
    <location>
        <position position="109"/>
    </location>
</feature>
<comment type="function">
    <text evidence="1">Catalyzes the condensation of (S)-aspartate-beta-semialdehyde [(S)-ASA] and pyruvate to 4-hydroxy-tetrahydrodipicolinate (HTPA).</text>
</comment>
<comment type="catalytic activity">
    <reaction evidence="1">
        <text>L-aspartate 4-semialdehyde + pyruvate = (2S,4S)-4-hydroxy-2,3,4,5-tetrahydrodipicolinate + H2O + H(+)</text>
        <dbReference type="Rhea" id="RHEA:34171"/>
        <dbReference type="ChEBI" id="CHEBI:15361"/>
        <dbReference type="ChEBI" id="CHEBI:15377"/>
        <dbReference type="ChEBI" id="CHEBI:15378"/>
        <dbReference type="ChEBI" id="CHEBI:67139"/>
        <dbReference type="ChEBI" id="CHEBI:537519"/>
        <dbReference type="EC" id="4.3.3.7"/>
    </reaction>
</comment>
<comment type="pathway">
    <text evidence="1">Amino-acid biosynthesis; L-lysine biosynthesis via DAP pathway; (S)-tetrahydrodipicolinate from L-aspartate: step 3/4.</text>
</comment>
<comment type="subunit">
    <text evidence="1">Homotetramer; dimer of dimers.</text>
</comment>
<comment type="subcellular location">
    <subcellularLocation>
        <location evidence="1">Cytoplasm</location>
    </subcellularLocation>
</comment>
<comment type="similarity">
    <text evidence="1">Belongs to the DapA family.</text>
</comment>
<comment type="caution">
    <text evidence="2">Was originally thought to be a dihydrodipicolinate synthase (DHDPS), catalyzing the condensation of (S)-aspartate-beta-semialdehyde [(S)-ASA] and pyruvate to dihydrodipicolinate (DHDP). However, it was shown in E.coli that the product of the enzymatic reaction is not dihydrodipicolinate but in fact (4S)-4-hydroxy-2,3,4,5-tetrahydro-(2S)-dipicolinic acid (HTPA), and that the consecutive dehydration reaction leading to DHDP is not spontaneous but catalyzed by DapB.</text>
</comment>
<protein>
    <recommendedName>
        <fullName evidence="1">4-hydroxy-tetrahydrodipicolinate synthase</fullName>
        <shortName evidence="1">HTPA synthase</shortName>
        <ecNumber evidence="1">4.3.3.7</ecNumber>
    </recommendedName>
</protein>
<name>DAPA_ALIB4</name>
<organism>
    <name type="scientific">Aliarcobacter butzleri (strain RM4018)</name>
    <name type="common">Arcobacter butzleri</name>
    <dbReference type="NCBI Taxonomy" id="367737"/>
    <lineage>
        <taxon>Bacteria</taxon>
        <taxon>Pseudomonadati</taxon>
        <taxon>Campylobacterota</taxon>
        <taxon>Epsilonproteobacteria</taxon>
        <taxon>Campylobacterales</taxon>
        <taxon>Arcobacteraceae</taxon>
        <taxon>Aliarcobacter</taxon>
    </lineage>
</organism>